<accession>Q8ZDZ6</accession>
<accession>Q0WEC8</accession>
<accession>Q74TH6</accession>
<name>LPP_YERPE</name>
<comment type="function">
    <text evidence="1">A highly abundant outer membrane lipoprotein that controls the distance between the inner and outer membranes. The only protein known to be covalently linked to the peptidoglycan network (PGN). Also non-covalently binds the PGN. The link between the cell outer membrane and PGN contributes to maintenance of the structural and functional integrity of the cell envelope, and maintains the correct distance between the PGN and the outer membrane.</text>
</comment>
<comment type="subunit">
    <text evidence="1">Homotrimer.</text>
</comment>
<comment type="subcellular location">
    <subcellularLocation>
        <location evidence="1">Cell outer membrane</location>
        <topology evidence="1">Lipid-anchor</topology>
        <orientation evidence="1">Periplasmic side</orientation>
    </subcellularLocation>
    <subcellularLocation>
        <location evidence="1">Secreted</location>
        <location evidence="1">Cell wall</location>
        <topology evidence="1">Peptidoglycan-anchor</topology>
    </subcellularLocation>
    <text evidence="1">Attached via its lipidated N-terminus to the inner leaflet of the outer membrane. Attached to the peptidoglycan network (PGN) via its C-terminus.</text>
</comment>
<comment type="similarity">
    <text evidence="1">Belongs to the Lpp family.</text>
</comment>
<comment type="sequence caution" evidence="2">
    <conflict type="erroneous initiation">
        <sequence resource="EMBL-CDS" id="AAS62389"/>
    </conflict>
    <text>Extended N-terminus.</text>
</comment>
<sequence length="78" mass="8317">MNRTKLVLGAVILASTMLAGCSSNAKIDQLSSDVQTLNAKVDQLSNDVNAVRADVQAAKDDAARANQRLDNQAQAYKK</sequence>
<reference key="1">
    <citation type="journal article" date="2001" name="Nature">
        <title>Genome sequence of Yersinia pestis, the causative agent of plague.</title>
        <authorList>
            <person name="Parkhill J."/>
            <person name="Wren B.W."/>
            <person name="Thomson N.R."/>
            <person name="Titball R.W."/>
            <person name="Holden M.T.G."/>
            <person name="Prentice M.B."/>
            <person name="Sebaihia M."/>
            <person name="James K.D."/>
            <person name="Churcher C.M."/>
            <person name="Mungall K.L."/>
            <person name="Baker S."/>
            <person name="Basham D."/>
            <person name="Bentley S.D."/>
            <person name="Brooks K."/>
            <person name="Cerdeno-Tarraga A.-M."/>
            <person name="Chillingworth T."/>
            <person name="Cronin A."/>
            <person name="Davies R.M."/>
            <person name="Davis P."/>
            <person name="Dougan G."/>
            <person name="Feltwell T."/>
            <person name="Hamlin N."/>
            <person name="Holroyd S."/>
            <person name="Jagels K."/>
            <person name="Karlyshev A.V."/>
            <person name="Leather S."/>
            <person name="Moule S."/>
            <person name="Oyston P.C.F."/>
            <person name="Quail M.A."/>
            <person name="Rutherford K.M."/>
            <person name="Simmonds M."/>
            <person name="Skelton J."/>
            <person name="Stevens K."/>
            <person name="Whitehead S."/>
            <person name="Barrell B.G."/>
        </authorList>
    </citation>
    <scope>NUCLEOTIDE SEQUENCE [LARGE SCALE GENOMIC DNA]</scope>
    <source>
        <strain>CO-92 / Biovar Orientalis</strain>
    </source>
</reference>
<reference key="2">
    <citation type="journal article" date="2002" name="J. Bacteriol.">
        <title>Genome sequence of Yersinia pestis KIM.</title>
        <authorList>
            <person name="Deng W."/>
            <person name="Burland V."/>
            <person name="Plunkett G. III"/>
            <person name="Boutin A."/>
            <person name="Mayhew G.F."/>
            <person name="Liss P."/>
            <person name="Perna N.T."/>
            <person name="Rose D.J."/>
            <person name="Mau B."/>
            <person name="Zhou S."/>
            <person name="Schwartz D.C."/>
            <person name="Fetherston J.D."/>
            <person name="Lindler L.E."/>
            <person name="Brubaker R.R."/>
            <person name="Plano G.V."/>
            <person name="Straley S.C."/>
            <person name="McDonough K.A."/>
            <person name="Nilles M.L."/>
            <person name="Matson J.S."/>
            <person name="Blattner F.R."/>
            <person name="Perry R.D."/>
        </authorList>
    </citation>
    <scope>NUCLEOTIDE SEQUENCE [LARGE SCALE GENOMIC DNA]</scope>
    <source>
        <strain>KIM10+ / Biovar Mediaevalis</strain>
    </source>
</reference>
<reference key="3">
    <citation type="journal article" date="2004" name="DNA Res.">
        <title>Complete genome sequence of Yersinia pestis strain 91001, an isolate avirulent to humans.</title>
        <authorList>
            <person name="Song Y."/>
            <person name="Tong Z."/>
            <person name="Wang J."/>
            <person name="Wang L."/>
            <person name="Guo Z."/>
            <person name="Han Y."/>
            <person name="Zhang J."/>
            <person name="Pei D."/>
            <person name="Zhou D."/>
            <person name="Qin H."/>
            <person name="Pang X."/>
            <person name="Han Y."/>
            <person name="Zhai J."/>
            <person name="Li M."/>
            <person name="Cui B."/>
            <person name="Qi Z."/>
            <person name="Jin L."/>
            <person name="Dai R."/>
            <person name="Chen F."/>
            <person name="Li S."/>
            <person name="Ye C."/>
            <person name="Du Z."/>
            <person name="Lin W."/>
            <person name="Wang J."/>
            <person name="Yu J."/>
            <person name="Yang H."/>
            <person name="Wang J."/>
            <person name="Huang P."/>
            <person name="Yang R."/>
        </authorList>
    </citation>
    <scope>NUCLEOTIDE SEQUENCE [LARGE SCALE GENOMIC DNA]</scope>
    <source>
        <strain>91001 / Biovar Mediaevalis</strain>
    </source>
</reference>
<dbReference type="EMBL" id="AL590842">
    <property type="protein sequence ID" value="CAL21022.1"/>
    <property type="molecule type" value="Genomic_DNA"/>
</dbReference>
<dbReference type="EMBL" id="AE009952">
    <property type="status" value="NOT_ANNOTATED_CDS"/>
    <property type="molecule type" value="Genomic_DNA"/>
</dbReference>
<dbReference type="EMBL" id="AE017042">
    <property type="protein sequence ID" value="AAS62389.1"/>
    <property type="status" value="ALT_INIT"/>
    <property type="molecule type" value="Genomic_DNA"/>
</dbReference>
<dbReference type="PIR" id="AC0292">
    <property type="entry name" value="AC0292"/>
</dbReference>
<dbReference type="RefSeq" id="WP_002227902.1">
    <property type="nucleotide sequence ID" value="NZ_WUCM01000049.1"/>
</dbReference>
<dbReference type="RefSeq" id="YP_002347360.1">
    <property type="nucleotide sequence ID" value="NC_003143.1"/>
</dbReference>
<dbReference type="SMR" id="Q8ZDZ6"/>
<dbReference type="STRING" id="214092.YPO2394"/>
<dbReference type="PaxDb" id="214092-YPO2394"/>
<dbReference type="EnsemblBacteria" id="AAS62389">
    <property type="protein sequence ID" value="AAS62389"/>
    <property type="gene ID" value="YP_2181"/>
</dbReference>
<dbReference type="KEGG" id="ype:YPO2394"/>
<dbReference type="KEGG" id="ypm:YP_2181"/>
<dbReference type="PATRIC" id="fig|214092.21.peg.2802"/>
<dbReference type="eggNOG" id="COG4238">
    <property type="taxonomic scope" value="Bacteria"/>
</dbReference>
<dbReference type="HOGENOM" id="CLU_166934_2_1_6"/>
<dbReference type="OMA" id="ANDRIDN"/>
<dbReference type="OrthoDB" id="6567756at2"/>
<dbReference type="Proteomes" id="UP000000815">
    <property type="component" value="Chromosome"/>
</dbReference>
<dbReference type="Proteomes" id="UP000001019">
    <property type="component" value="Chromosome"/>
</dbReference>
<dbReference type="Proteomes" id="UP000002490">
    <property type="component" value="Chromosome"/>
</dbReference>
<dbReference type="GO" id="GO:0009279">
    <property type="term" value="C:cell outer membrane"/>
    <property type="evidence" value="ECO:0007669"/>
    <property type="project" value="UniProtKB-SubCell"/>
</dbReference>
<dbReference type="GO" id="GO:0005576">
    <property type="term" value="C:extracellular region"/>
    <property type="evidence" value="ECO:0007669"/>
    <property type="project" value="UniProtKB-KW"/>
</dbReference>
<dbReference type="GO" id="GO:0008289">
    <property type="term" value="F:lipid binding"/>
    <property type="evidence" value="ECO:0007669"/>
    <property type="project" value="UniProtKB-UniRule"/>
</dbReference>
<dbReference type="GO" id="GO:0042834">
    <property type="term" value="F:peptidoglycan binding"/>
    <property type="evidence" value="ECO:0007669"/>
    <property type="project" value="UniProtKB-UniRule"/>
</dbReference>
<dbReference type="GO" id="GO:0030258">
    <property type="term" value="P:lipid modification"/>
    <property type="evidence" value="ECO:0007669"/>
    <property type="project" value="UniProtKB-UniRule"/>
</dbReference>
<dbReference type="GO" id="GO:0043580">
    <property type="term" value="P:periplasmic space organization"/>
    <property type="evidence" value="ECO:0007669"/>
    <property type="project" value="UniProtKB-UniRule"/>
</dbReference>
<dbReference type="FunFam" id="1.20.5.190:FF:000002">
    <property type="entry name" value="Major outer membrane lipoprotein"/>
    <property type="match status" value="1"/>
</dbReference>
<dbReference type="Gene3D" id="1.20.5.190">
    <property type="match status" value="1"/>
</dbReference>
<dbReference type="HAMAP" id="MF_00843">
    <property type="entry name" value="Lpp"/>
    <property type="match status" value="1"/>
</dbReference>
<dbReference type="InterPro" id="IPR006817">
    <property type="entry name" value="Lipoprotein_leucine-zipper_dom"/>
</dbReference>
<dbReference type="InterPro" id="IPR016367">
    <property type="entry name" value="MOM_Lpp"/>
</dbReference>
<dbReference type="NCBIfam" id="NF040598">
    <property type="entry name" value="Ala_zip_lipo"/>
    <property type="match status" value="1"/>
</dbReference>
<dbReference type="NCBIfam" id="NF011925">
    <property type="entry name" value="PRK15396.1"/>
    <property type="match status" value="1"/>
</dbReference>
<dbReference type="PANTHER" id="PTHR38763:SF1">
    <property type="entry name" value="MAJOR OUTER MEMBRANE LIPOPROTEIN LPP"/>
    <property type="match status" value="1"/>
</dbReference>
<dbReference type="PANTHER" id="PTHR38763">
    <property type="entry name" value="MAJOR OUTER MEMBRANE PROLIPOPROTEIN LPP"/>
    <property type="match status" value="1"/>
</dbReference>
<dbReference type="Pfam" id="PF04728">
    <property type="entry name" value="LPP"/>
    <property type="match status" value="1"/>
</dbReference>
<dbReference type="PIRSF" id="PIRSF002855">
    <property type="entry name" value="Murein-lipoprotein"/>
    <property type="match status" value="1"/>
</dbReference>
<dbReference type="SUPFAM" id="SSF58042">
    <property type="entry name" value="Outer membrane lipoprotein"/>
    <property type="match status" value="1"/>
</dbReference>
<dbReference type="PROSITE" id="PS51257">
    <property type="entry name" value="PROKAR_LIPOPROTEIN"/>
    <property type="match status" value="1"/>
</dbReference>
<proteinExistence type="inferred from homology"/>
<organism>
    <name type="scientific">Yersinia pestis</name>
    <dbReference type="NCBI Taxonomy" id="632"/>
    <lineage>
        <taxon>Bacteria</taxon>
        <taxon>Pseudomonadati</taxon>
        <taxon>Pseudomonadota</taxon>
        <taxon>Gammaproteobacteria</taxon>
        <taxon>Enterobacterales</taxon>
        <taxon>Yersiniaceae</taxon>
        <taxon>Yersinia</taxon>
    </lineage>
</organism>
<feature type="signal peptide" evidence="1">
    <location>
        <begin position="1"/>
        <end position="20"/>
    </location>
</feature>
<feature type="chain" id="PRO_0000018348" description="Major outer membrane lipoprotein Lpp" evidence="1">
    <location>
        <begin position="21"/>
        <end position="78"/>
    </location>
</feature>
<feature type="repeat" evidence="1">
    <location>
        <begin position="24"/>
        <end position="34"/>
    </location>
</feature>
<feature type="repeat" evidence="1">
    <location>
        <begin position="38"/>
        <end position="48"/>
    </location>
</feature>
<feature type="coiled-coil region" evidence="1">
    <location>
        <begin position="27"/>
        <end position="75"/>
    </location>
</feature>
<feature type="modified residue" description="N6-murein peptidoglycan lysine" evidence="1">
    <location>
        <position position="78"/>
    </location>
</feature>
<feature type="lipid moiety-binding region" description="N-palmitoyl cysteine" evidence="1">
    <location>
        <position position="21"/>
    </location>
</feature>
<feature type="lipid moiety-binding region" description="S-diacylglycerol cysteine" evidence="1">
    <location>
        <position position="21"/>
    </location>
</feature>
<evidence type="ECO:0000255" key="1">
    <source>
        <dbReference type="HAMAP-Rule" id="MF_00843"/>
    </source>
</evidence>
<evidence type="ECO:0000305" key="2"/>
<keyword id="KW-0998">Cell outer membrane</keyword>
<keyword id="KW-0134">Cell wall</keyword>
<keyword id="KW-0175">Coiled coil</keyword>
<keyword id="KW-0449">Lipoprotein</keyword>
<keyword id="KW-0472">Membrane</keyword>
<keyword id="KW-0564">Palmitate</keyword>
<keyword id="KW-0572">Peptidoglycan-anchor</keyword>
<keyword id="KW-1185">Reference proteome</keyword>
<keyword id="KW-0677">Repeat</keyword>
<keyword id="KW-0964">Secreted</keyword>
<keyword id="KW-0732">Signal</keyword>
<gene>
    <name evidence="1" type="primary">lpp</name>
    <name type="ordered locus">YPO2394</name>
    <name type="ordered locus">y1943.1</name>
    <name type="ordered locus">YP_2181</name>
</gene>
<protein>
    <recommendedName>
        <fullName evidence="1">Major outer membrane lipoprotein Lpp</fullName>
    </recommendedName>
    <alternativeName>
        <fullName evidence="1">Braun lipoprotein</fullName>
        <shortName evidence="1">BLP</shortName>
    </alternativeName>
</protein>